<feature type="chain" id="PRO_0000415438" description="Transcription factor MYB76">
    <location>
        <begin position="1"/>
        <end position="338"/>
    </location>
</feature>
<feature type="domain" description="HTH myb-type 1" evidence="1">
    <location>
        <begin position="9"/>
        <end position="65"/>
    </location>
</feature>
<feature type="domain" description="HTH myb-type 2" evidence="1">
    <location>
        <begin position="66"/>
        <end position="116"/>
    </location>
</feature>
<feature type="DNA-binding region" description="H-T-H motif" evidence="1">
    <location>
        <begin position="37"/>
        <end position="61"/>
    </location>
</feature>
<feature type="DNA-binding region" description="H-T-H motif" evidence="1">
    <location>
        <begin position="89"/>
        <end position="112"/>
    </location>
</feature>
<feature type="region of interest" description="Disordered" evidence="2">
    <location>
        <begin position="123"/>
        <end position="171"/>
    </location>
</feature>
<feature type="region of interest" description="Disordered" evidence="2">
    <location>
        <begin position="176"/>
        <end position="195"/>
    </location>
</feature>
<feature type="compositionally biased region" description="Basic and acidic residues" evidence="2">
    <location>
        <begin position="140"/>
        <end position="154"/>
    </location>
</feature>
<feature type="compositionally biased region" description="Low complexity" evidence="2">
    <location>
        <begin position="155"/>
        <end position="171"/>
    </location>
</feature>
<feature type="sequence conflict" description="In Ref. 5; AAS10088." evidence="9" ref="5">
    <original>L</original>
    <variation>S</variation>
    <location>
        <position position="61"/>
    </location>
</feature>
<proteinExistence type="evidence at protein level"/>
<keyword id="KW-0238">DNA-binding</keyword>
<keyword id="KW-0539">Nucleus</keyword>
<keyword id="KW-1185">Reference proteome</keyword>
<keyword id="KW-0677">Repeat</keyword>
<keyword id="KW-0804">Transcription</keyword>
<keyword id="KW-0805">Transcription regulation</keyword>
<reference key="1">
    <citation type="journal article" date="1998" name="Plant J.">
        <title>Towards functional characterisation of the members of the R2R3-MYB gene family from Arabidopsis thaliana.</title>
        <authorList>
            <person name="Kranz H.D."/>
            <person name="Denekamp M."/>
            <person name="Greco R."/>
            <person name="Jin H.-L."/>
            <person name="Leyva A."/>
            <person name="Meissner R.C."/>
            <person name="Petroni K."/>
            <person name="Urzainqui A."/>
            <person name="Bevan M."/>
            <person name="Martin C."/>
            <person name="Smeekens S."/>
            <person name="Tonelli C."/>
            <person name="Paz-Ares J."/>
            <person name="Weisshaar B."/>
        </authorList>
    </citation>
    <scope>NUCLEOTIDE SEQUENCE [MRNA]</scope>
    <scope>NOMENCLATURE</scope>
    <source>
        <strain>cv. Columbia</strain>
    </source>
</reference>
<reference key="2">
    <citation type="journal article" date="1998" name="DNA Res.">
        <title>Structural analysis of Arabidopsis thaliana chromosome 5. IV. Sequence features of the regions of 1,456,315 bp covered by nineteen physically assigned P1 and TAC clones.</title>
        <authorList>
            <person name="Sato S."/>
            <person name="Kaneko T."/>
            <person name="Kotani H."/>
            <person name="Nakamura Y."/>
            <person name="Asamizu E."/>
            <person name="Miyajima N."/>
            <person name="Tabata S."/>
        </authorList>
    </citation>
    <scope>NUCLEOTIDE SEQUENCE [LARGE SCALE GENOMIC DNA]</scope>
    <source>
        <strain>cv. Columbia</strain>
    </source>
</reference>
<reference key="3">
    <citation type="journal article" date="2017" name="Plant J.">
        <title>Araport11: a complete reannotation of the Arabidopsis thaliana reference genome.</title>
        <authorList>
            <person name="Cheng C.Y."/>
            <person name="Krishnakumar V."/>
            <person name="Chan A.P."/>
            <person name="Thibaud-Nissen F."/>
            <person name="Schobel S."/>
            <person name="Town C.D."/>
        </authorList>
    </citation>
    <scope>GENOME REANNOTATION</scope>
    <source>
        <strain>cv. Columbia</strain>
    </source>
</reference>
<reference key="4">
    <citation type="journal article" date="2006" name="Plant Biotechnol. J.">
        <title>Simultaneous high-throughput recombinational cloning of open reading frames in closed and open configurations.</title>
        <authorList>
            <person name="Underwood B.A."/>
            <person name="Vanderhaeghen R."/>
            <person name="Whitford R."/>
            <person name="Town C.D."/>
            <person name="Hilson P."/>
        </authorList>
    </citation>
    <scope>NUCLEOTIDE SEQUENCE [LARGE SCALE MRNA]</scope>
    <source>
        <strain>cv. Columbia</strain>
    </source>
</reference>
<reference key="5">
    <citation type="submission" date="2004-01" db="EMBL/GenBank/DDBJ databases">
        <title>The MYB transcription factor family in Arabidopsis: a genome-wide cloning and expression pattern analysis.</title>
        <authorList>
            <person name="Qu L.-J."/>
            <person name="Gu H."/>
        </authorList>
    </citation>
    <scope>NUCLEOTIDE SEQUENCE [LARGE SCALE MRNA]</scope>
</reference>
<reference key="6">
    <citation type="journal article" date="2001" name="Curr. Opin. Plant Biol.">
        <title>The R2R3-MYB gene family in Arabidopsis thaliana.</title>
        <authorList>
            <person name="Stracke R."/>
            <person name="Werber M."/>
            <person name="Weisshaar B."/>
        </authorList>
    </citation>
    <scope>GENE FAMILY</scope>
    <scope>NOMENCLATURE</scope>
    <source>
        <strain>cv. Columbia</strain>
    </source>
</reference>
<reference key="7">
    <citation type="journal article" date="2006" name="Plant Mol. Biol.">
        <title>The MYB transcription factor superfamily of Arabidopsis: expression analysis and phylogenetic comparison with the rice MYB family.</title>
        <authorList>
            <person name="Chen Y."/>
            <person name="Yang X."/>
            <person name="He K."/>
            <person name="Liu M."/>
            <person name="Li J."/>
            <person name="Gao Z."/>
            <person name="Lin Z."/>
            <person name="Zhang Y."/>
            <person name="Wang X."/>
            <person name="Qiu X."/>
            <person name="Shen Y."/>
            <person name="Zhang L."/>
            <person name="Deng X."/>
            <person name="Luo J."/>
            <person name="Deng X.-W."/>
            <person name="Chen Z."/>
            <person name="Gu H."/>
            <person name="Qu L.-J."/>
        </authorList>
    </citation>
    <scope>GENE FAMILY</scope>
    <scope>INDUCTION BY IAA AND JA</scope>
</reference>
<reference key="8">
    <citation type="journal article" date="2008" name="New Phytol.">
        <title>HAG2/MYB76 and HAG3/MYB29 exert a specific and coordinated control on the regulation of aliphatic glucosinolate biosynthesis in Arabidopsis thaliana.</title>
        <authorList>
            <person name="Gigolashvili T."/>
            <person name="Engqvist M."/>
            <person name="Yatusevich R."/>
            <person name="Mueller C."/>
            <person name="Fluegge U.I."/>
        </authorList>
    </citation>
    <scope>FUNCTION IN GLUCOSINOLATES BIOSYNTHESIS</scope>
    <scope>TISSUE SPECIFICITY</scope>
    <scope>DEVELOPMENTAL STAGE</scope>
    <scope>INDUCTION BY MECHANICAL STIMULI</scope>
</reference>
<reference key="9">
    <citation type="journal article" date="2010" name="Plant Physiol.">
        <title>A complex interplay of three R2R3 MYB transcription factors determines the profile of aliphatic glucosinolates in Arabidopsis.</title>
        <authorList>
            <person name="Soenderby I.E."/>
            <person name="Burow M."/>
            <person name="Rowe H.C."/>
            <person name="Kliebenstein D.J."/>
            <person name="Halkier B.A."/>
        </authorList>
    </citation>
    <scope>FUNCTION</scope>
    <source>
        <strain>cv. Columbia</strain>
    </source>
</reference>
<reference key="10">
    <citation type="journal article" date="2012" name="Front. Plant Sci.">
        <title>Glucosinolates are produced in trichomes of Arabidopsis thaliana.</title>
        <authorList>
            <person name="Frerigmann H."/>
            <person name="Boettcher C."/>
            <person name="Baatout D."/>
            <person name="Gigolashvili T."/>
        </authorList>
    </citation>
    <scope>TISSUE SPECIFICITY</scope>
    <source>
        <strain>cv. Columbia</strain>
    </source>
</reference>
<reference key="11">
    <citation type="journal article" date="2013" name="Plant Cell Physiol.">
        <title>Novel insights into the function of Arabidopsis R2R3-MYB transcription factors regulating aliphatic glucosinolate biosynthesis.</title>
        <authorList>
            <person name="Li Y."/>
            <person name="Sawada Y."/>
            <person name="Hirai A."/>
            <person name="Sato M."/>
            <person name="Kuwahara A."/>
            <person name="Yan X."/>
            <person name="Hirai M.Y."/>
        </authorList>
    </citation>
    <scope>FUNCTION</scope>
    <scope>INDUCTION BY SULFUR</scope>
</reference>
<reference key="12">
    <citation type="journal article" date="2013" name="Plant Cell">
        <title>Arabidopsis basic helix-loop-helix transcription factors MYC2, MYC3, and MYC4 regulate glucosinolate biosynthesis, insect performance, and feeding behavior.</title>
        <authorList>
            <person name="Schweizer F."/>
            <person name="Fernandez-Calvo P."/>
            <person name="Zander M."/>
            <person name="Diez-Diaz M."/>
            <person name="Fonseca S."/>
            <person name="Glauser G."/>
            <person name="Lewsey M.G."/>
            <person name="Ecker J.R."/>
            <person name="Solano R."/>
            <person name="Reymond P."/>
        </authorList>
    </citation>
    <scope>FUNCTION</scope>
    <scope>INTERACTION WITH MYC2; MYC3 AND MYC4</scope>
</reference>
<gene>
    <name type="primary">MYB76</name>
    <name type="synonym">HAG2</name>
    <name type="ordered locus">At5g07700</name>
    <name type="ORF">MBK20.16</name>
</gene>
<evidence type="ECO:0000255" key="1">
    <source>
        <dbReference type="PROSITE-ProRule" id="PRU00625"/>
    </source>
</evidence>
<evidence type="ECO:0000256" key="2">
    <source>
        <dbReference type="SAM" id="MobiDB-lite"/>
    </source>
</evidence>
<evidence type="ECO:0000269" key="3">
    <source>
    </source>
</evidence>
<evidence type="ECO:0000269" key="4">
    <source>
    </source>
</evidence>
<evidence type="ECO:0000269" key="5">
    <source>
    </source>
</evidence>
<evidence type="ECO:0000269" key="6">
    <source>
    </source>
</evidence>
<evidence type="ECO:0000269" key="7">
    <source>
    </source>
</evidence>
<evidence type="ECO:0000269" key="8">
    <source>
    </source>
</evidence>
<evidence type="ECO:0000305" key="9"/>
<name>MYB76_ARATH</name>
<protein>
    <recommendedName>
        <fullName>Transcription factor MYB76</fullName>
    </recommendedName>
    <alternativeName>
        <fullName>Myb-related protein 76</fullName>
        <shortName>AtMYB76</shortName>
    </alternativeName>
    <alternativeName>
        <fullName>Protein HIGH ALIPHATIC GLUCOSINOLATE 2</fullName>
    </alternativeName>
</protein>
<dbReference type="EMBL" id="AF175992">
    <property type="protein sequence ID" value="AAD53097.1"/>
    <property type="molecule type" value="mRNA"/>
</dbReference>
<dbReference type="EMBL" id="AB010070">
    <property type="protein sequence ID" value="BAB11449.1"/>
    <property type="molecule type" value="Genomic_DNA"/>
</dbReference>
<dbReference type="EMBL" id="CP002688">
    <property type="protein sequence ID" value="AED91195.1"/>
    <property type="molecule type" value="Genomic_DNA"/>
</dbReference>
<dbReference type="EMBL" id="CP002688">
    <property type="protein sequence ID" value="ANM69764.1"/>
    <property type="molecule type" value="Genomic_DNA"/>
</dbReference>
<dbReference type="EMBL" id="DQ446930">
    <property type="protein sequence ID" value="ABE66141.1"/>
    <property type="molecule type" value="mRNA"/>
</dbReference>
<dbReference type="EMBL" id="DQ653273">
    <property type="protein sequence ID" value="ABK28689.1"/>
    <property type="status" value="ALT_SEQ"/>
    <property type="molecule type" value="mRNA"/>
</dbReference>
<dbReference type="EMBL" id="AY519618">
    <property type="protein sequence ID" value="AAS10088.1"/>
    <property type="molecule type" value="mRNA"/>
</dbReference>
<dbReference type="RefSeq" id="NP_001318501.1">
    <property type="nucleotide sequence ID" value="NM_001342956.1"/>
</dbReference>
<dbReference type="RefSeq" id="NP_196387.1">
    <property type="nucleotide sequence ID" value="NM_120852.2"/>
</dbReference>
<dbReference type="SMR" id="Q9SPG5"/>
<dbReference type="BioGRID" id="15942">
    <property type="interactions" value="4"/>
</dbReference>
<dbReference type="STRING" id="3702.Q9SPG5"/>
<dbReference type="PaxDb" id="3702-AT5G07700.1"/>
<dbReference type="EnsemblPlants" id="AT5G07700.1">
    <property type="protein sequence ID" value="AT5G07700.1"/>
    <property type="gene ID" value="AT5G07700"/>
</dbReference>
<dbReference type="EnsemblPlants" id="AT5G07700.2">
    <property type="protein sequence ID" value="AT5G07700.2"/>
    <property type="gene ID" value="AT5G07700"/>
</dbReference>
<dbReference type="GeneID" id="830663"/>
<dbReference type="Gramene" id="AT5G07700.1">
    <property type="protein sequence ID" value="AT5G07700.1"/>
    <property type="gene ID" value="AT5G07700"/>
</dbReference>
<dbReference type="Gramene" id="AT5G07700.2">
    <property type="protein sequence ID" value="AT5G07700.2"/>
    <property type="gene ID" value="AT5G07700"/>
</dbReference>
<dbReference type="KEGG" id="ath:AT5G07700"/>
<dbReference type="Araport" id="AT5G07700"/>
<dbReference type="TAIR" id="AT5G07700">
    <property type="gene designation" value="MYB76"/>
</dbReference>
<dbReference type="eggNOG" id="KOG0048">
    <property type="taxonomic scope" value="Eukaryota"/>
</dbReference>
<dbReference type="HOGENOM" id="CLU_028567_0_0_1"/>
<dbReference type="InParanoid" id="Q9SPG5"/>
<dbReference type="OMA" id="ITSWSTY"/>
<dbReference type="OrthoDB" id="2143914at2759"/>
<dbReference type="PhylomeDB" id="Q9SPG5"/>
<dbReference type="PRO" id="PR:Q9SPG5"/>
<dbReference type="Proteomes" id="UP000006548">
    <property type="component" value="Chromosome 5"/>
</dbReference>
<dbReference type="ExpressionAtlas" id="Q9SPG5">
    <property type="expression patterns" value="baseline and differential"/>
</dbReference>
<dbReference type="GO" id="GO:0005634">
    <property type="term" value="C:nucleus"/>
    <property type="evidence" value="ECO:0007669"/>
    <property type="project" value="UniProtKB-SubCell"/>
</dbReference>
<dbReference type="GO" id="GO:0003700">
    <property type="term" value="F:DNA-binding transcription factor activity"/>
    <property type="evidence" value="ECO:0000250"/>
    <property type="project" value="TAIR"/>
</dbReference>
<dbReference type="GO" id="GO:0000976">
    <property type="term" value="F:transcription cis-regulatory region binding"/>
    <property type="evidence" value="ECO:0000353"/>
    <property type="project" value="TAIR"/>
</dbReference>
<dbReference type="GO" id="GO:0010439">
    <property type="term" value="P:regulation of glucosinolate biosynthetic process"/>
    <property type="evidence" value="ECO:0000315"/>
    <property type="project" value="TAIR"/>
</dbReference>
<dbReference type="GO" id="GO:0009625">
    <property type="term" value="P:response to insect"/>
    <property type="evidence" value="ECO:0000270"/>
    <property type="project" value="TAIR"/>
</dbReference>
<dbReference type="GO" id="GO:0009414">
    <property type="term" value="P:response to water deprivation"/>
    <property type="evidence" value="ECO:0000270"/>
    <property type="project" value="TAIR"/>
</dbReference>
<dbReference type="GO" id="GO:0009611">
    <property type="term" value="P:response to wounding"/>
    <property type="evidence" value="ECO:0000270"/>
    <property type="project" value="UniProtKB"/>
</dbReference>
<dbReference type="CDD" id="cd00167">
    <property type="entry name" value="SANT"/>
    <property type="match status" value="2"/>
</dbReference>
<dbReference type="FunFam" id="1.10.10.60:FF:000394">
    <property type="entry name" value="MYB transcription factor"/>
    <property type="match status" value="1"/>
</dbReference>
<dbReference type="FunFam" id="1.10.10.60:FF:000001">
    <property type="entry name" value="MYB-related transcription factor"/>
    <property type="match status" value="1"/>
</dbReference>
<dbReference type="Gene3D" id="1.10.10.60">
    <property type="entry name" value="Homeodomain-like"/>
    <property type="match status" value="2"/>
</dbReference>
<dbReference type="InterPro" id="IPR009057">
    <property type="entry name" value="Homeodomain-like_sf"/>
</dbReference>
<dbReference type="InterPro" id="IPR017930">
    <property type="entry name" value="Myb_dom"/>
</dbReference>
<dbReference type="InterPro" id="IPR015495">
    <property type="entry name" value="Myb_TF_plants"/>
</dbReference>
<dbReference type="InterPro" id="IPR001005">
    <property type="entry name" value="SANT/Myb"/>
</dbReference>
<dbReference type="PANTHER" id="PTHR10641">
    <property type="entry name" value="MYB FAMILY TRANSCRIPTION FACTOR"/>
    <property type="match status" value="1"/>
</dbReference>
<dbReference type="PANTHER" id="PTHR10641:SF1405">
    <property type="entry name" value="TRANSCRIPTION FACTOR MYB29-RELATED"/>
    <property type="match status" value="1"/>
</dbReference>
<dbReference type="Pfam" id="PF00249">
    <property type="entry name" value="Myb_DNA-binding"/>
    <property type="match status" value="2"/>
</dbReference>
<dbReference type="SMART" id="SM00717">
    <property type="entry name" value="SANT"/>
    <property type="match status" value="2"/>
</dbReference>
<dbReference type="SUPFAM" id="SSF46689">
    <property type="entry name" value="Homeodomain-like"/>
    <property type="match status" value="1"/>
</dbReference>
<dbReference type="PROSITE" id="PS51294">
    <property type="entry name" value="HTH_MYB"/>
    <property type="match status" value="2"/>
</dbReference>
<organism>
    <name type="scientific">Arabidopsis thaliana</name>
    <name type="common">Mouse-ear cress</name>
    <dbReference type="NCBI Taxonomy" id="3702"/>
    <lineage>
        <taxon>Eukaryota</taxon>
        <taxon>Viridiplantae</taxon>
        <taxon>Streptophyta</taxon>
        <taxon>Embryophyta</taxon>
        <taxon>Tracheophyta</taxon>
        <taxon>Spermatophyta</taxon>
        <taxon>Magnoliopsida</taxon>
        <taxon>eudicotyledons</taxon>
        <taxon>Gunneridae</taxon>
        <taxon>Pentapetalae</taxon>
        <taxon>rosids</taxon>
        <taxon>malvids</taxon>
        <taxon>Brassicales</taxon>
        <taxon>Brassicaceae</taxon>
        <taxon>Camelineae</taxon>
        <taxon>Arabidopsis</taxon>
    </lineage>
</organism>
<accession>Q9SPG5</accession>
<accession>A0MFE7</accession>
<accession>Q6R062</accession>
<comment type="function">
    <text evidence="4 5 7 8">Plays a role in determining the spatial distribution of aliphatic glucosinolates (AGLSs) within the leaf, mostly short chained. Together with MYB28/HAG1 and MYB29/HAG3, promotes aliphatic glucosinolate biosynthesis and represses indolic glucosinolate biosynthesis, but could not activate AGSL biosynthesis on its own.</text>
</comment>
<comment type="subunit">
    <text>Can form complexes with MYC2, MYC3 or MYC4.</text>
</comment>
<comment type="subcellular location">
    <subcellularLocation>
        <location evidence="1">Nucleus</location>
    </subcellularLocation>
</comment>
<comment type="tissue specificity">
    <text evidence="4 6">Expressed in both vegetative and generative organs. Mostly present in inflorescences, flowers and seedlings, in the transition zone between roots and the foliar part, and stems, and, to a lower extent, in leaves (in midvein and trichomes).</text>
</comment>
<comment type="developmental stage">
    <text evidence="4">Primarily present around the midvein in seedlings. Accumulates gradually in expanding leaves, reaching a maximum in fully expanded leaves in both primary and secondary veins.</text>
</comment>
<comment type="induction">
    <text evidence="3 4 7">Slightly induced by auxin (IAA) and jasmonic acid (JA). Accumulates upon mechanical stimuli (e.g. wounding) in inflorescence. Down-regulated by sulfur-deficient stress.</text>
</comment>
<comment type="sequence caution" evidence="9">
    <conflict type="erroneous termination">
        <sequence resource="EMBL-CDS" id="ABK28689"/>
    </conflict>
    <text>Extended C-terminus.</text>
</comment>
<sequence>MSKRPYCIGEGLKKGAWTTEEDKKLISYIHDHGEGGWRDIPEKAGLKRCGKSCRLRWTNYLKPDIKRGEFSYEEEQIIIMLHASRGNKWSVIARHLPKRTDNEVKNYWNTHLKKRLIDDGIDPVTHKPLASSNPNPVEPMKFDFQKKSNQDEHSSQSSSTTPASLPLSSNLNSVKSKISSGETQIESGHVSCKKRFGRSSSTSRLLNKVAARASSIGNILSTSIEGTLRSPASSSGLPDSFSQSYEYMIDNKEDLGTSIDLNIPEYDFPQFLEQLINDDDENENIVGPEQDLLMSDFPSTFVDEDDILGDITSWSTYLLDHPNFMYESDQDSDEKNFL</sequence>